<comment type="function">
    <text evidence="1">Cadherins are calcium-dependent cell adhesion proteins. They preferentially interact with themselves in a homophilic manner in connecting cells (By similarity).</text>
</comment>
<comment type="subcellular location">
    <subcellularLocation>
        <location evidence="7">Cell membrane</location>
        <topology evidence="7">Single-pass type I membrane protein</topology>
    </subcellularLocation>
</comment>
<comment type="tissue specificity">
    <text evidence="5 6">As cell intercalation proceeds, a row of stigmatophore cells surrounding the spiracular chamber show expression of Cad86C. Expression is regulated by the Abd-B cascade, requiring sal. Expressed in a broad region of the morphogenetic furrow and in clusters of cells posterior to the morphogenetic furrow. Weakly expressed in the epithelium of wing imaginal disks. In eye imaginal disk cells within the morphogenetic furrow, expression is localized to the apical region.</text>
</comment>
<comment type="induction">
    <text evidence="6">By hedgehog (hh) and dpp signal transduction in the morphogenetic furrow.</text>
</comment>
<comment type="domain">
    <text evidence="1">Three calcium ions are usually bound at the interface of each cadherin domain and rigidify the connections, imparting a strong curvature to the full-length ectodomain.</text>
</comment>
<comment type="sequence caution" evidence="7">
    <conflict type="erroneous termination">
        <sequence resource="EMBL-CDS" id="AAM29379"/>
    </conflict>
    <text>Truncated C-terminus.</text>
</comment>
<accession>Q9VGW1</accession>
<accession>B3GN10</accession>
<accession>Q8MZ37</accession>
<sequence length="1943" mass="220408">MASTSSSQPEKNRSHVPLCRLGTEPVSRTGAAEEPSGQRECYYYAPATSPHHHHHHHHQHHHHHRLKQHHRHHHHHHRLQHHHHHHQQQHNHQNQQMQHHWPSRLGPIGPWLGAMTAYRLLTISLLIGILCPHHVQGADPKFDPTTRMRLVLVPADAQVNSVIYRLRATDEEFDYPLTFEFVGDASASTVKVESLPCTKYNSVCQANIVLQRRLEPGRYYDFQVSVKDTKGGMTTQLCSITATNFTTPHDLIFPHKPGIIMIPEDAKRGTELDYVIARKNPLFQKPVYLELWGSPLFAIRQKIVSSETTEGTVFLLGPLDFEKQAMYHLTILANDAYAEPGQDSRNIAGMEIVVIVQDVQDQPPVFTSAPPVTKLPPGILPGDKILQVHAEDGDKGNPREVRYGLVSENNPFTSFFDINETSGEIFLMRPLEDIAFITHVGDPVLLTVIAEEVKVGRDEPPALASTVQLAFFLPDRTNSPPYFENDHYVSRVDENAPQGTALTFVDPYVPRVYDDDTGKNGVFSLTLLNNNGTFEISPNVAERSAGFLIRVRDNSMLDYEQQQSVQFQILAQELGPATNLSALVNVTVYINDVNDNAPVFEQPAYSVELPENMTAGTKVVQVLATDPDSGLGGKVRYTAILGYLNTSLNLDAETGLITVSTNKHGFDREVMPEYHLYVEARDMDGEGNRAQVPLIIKLIDVNDETPIFDKDLYEFILTHDLMGFTTTAVIHAEDKDATAPNNEVRYEIINGNYDNQFVLDKVTGELTVREKIHLRSKKNAKTRRRRQAGSDDEDTDIFILTARAYDLGVPVRFSTTTIRVYPPESRKRSVKFVVPGHNPDKAKTEETLSALSGGKVYIHNIRPLSPDEPGAKDIPAGNPGIKERSVVTATVIYDSSSVVDISEIQQRLSHHNNSYAIMPQDTSSTDTQYKAENKVLFWLLILLATLVALTILILLLCCICSWCPLYGAATKRIVNISRTEDDVHLVHREMANGKQTKSVQVAEWMGRRDAWSAEKPPDTRTKPTRWEFHDGREQLDEDVGRGQDIGEGDRRHIQSAEEQQRRVRIKHNRTAKDDLHLNFHNSRTNLINDRDVYMEDVIENRDLAGDREHITRTRVNRQEYARRKQYDSEVRHIDDDSMRRHEIDRGSDIDFNTAHNSLKSKRELFIKDGNVEILQLMTRDKTRDGLNLDDDNIYVNVPLKPAGNLSHPQLLMVDNTGKEILMRRFIEEQPDGKQIIREHYQIVPGATYIQSMPNEVQQGSTLKGDTFPLGKSGPNSIVYSQLEPEVKVIHTQPVQAGEGVSLDQQMQPAVSNQSLTHELEHSLKQQNALLRQILMEKEKLENAYTQHEVALETQSLPGQSMAIGTQTDCDAGTQTEGFDGVLDPEISLAKPSRRRARSENDESMSEDGYEYVRFNPPNSPEGVYWIKRRRTKKRPRQPRKRIVMVEEVKRKIRTPIKEEEEVQERKKRVPPKKPLRETKTSILRKQLSDESRKDQSRNGESQTGNRHRSESDSHNRDMFMEITDSMDELASPGSHSIRKIQVEKYYKHSDGDFDEDDTEYSIDSDGDEIVIRTNYPSRAQENERYRRQERTYAEPENPVDRKRPARKSSPTDSQPEAMPRLSRRDSSKRGSRKQTSSEPPHNRVSISKYESTVTENGRKLMSTSTEIVGSKRSLTDRSYQSETELAGLEHEERNVPKYMEWYYNKKKSSVSGRTSTESSKSQPSSKKKVGAAEKRVSKTRITAQPKDVEEYDETGGRYKPEPAPRKSPPKGSRLLKEDRALNKQHKPKIETDTNHPLLQHSEHRFERENALEVPAAPTKLPHYMYPETPPHAAAGGKESKSGRESKTSKEAKPKPSPIRENEVKVSNSKIYVEHRGTGHPTQKQLNASTLEDDHDSGIAMNSLLNSLGRRNPIAEKKSVFSIAYDDVSRVKKINSGGESPQYS</sequence>
<feature type="signal peptide" evidence="2">
    <location>
        <begin position="1"/>
        <end status="unknown"/>
    </location>
</feature>
<feature type="chain" id="PRO_0000004010" description="Cadherin-86C">
    <location>
        <begin status="unknown"/>
        <end position="1943"/>
    </location>
</feature>
<feature type="topological domain" description="Extracellular" evidence="2">
    <location>
        <begin position="1"/>
        <end position="934"/>
    </location>
</feature>
<feature type="transmembrane region" description="Helical" evidence="2">
    <location>
        <begin position="935"/>
        <end position="955"/>
    </location>
</feature>
<feature type="topological domain" description="Cytoplasmic" evidence="2">
    <location>
        <begin position="956"/>
        <end position="1943"/>
    </location>
</feature>
<feature type="domain" description="Cadherin 1" evidence="3">
    <location>
        <begin position="238"/>
        <end position="366"/>
    </location>
</feature>
<feature type="domain" description="Cadherin 2" evidence="3">
    <location>
        <begin position="367"/>
        <end position="483"/>
    </location>
</feature>
<feature type="domain" description="Cadherin 3" evidence="3">
    <location>
        <begin position="484"/>
        <end position="600"/>
    </location>
</feature>
<feature type="domain" description="Cadherin 4" evidence="3">
    <location>
        <begin position="601"/>
        <end position="708"/>
    </location>
</feature>
<feature type="domain" description="Cadherin 5" evidence="3">
    <location>
        <begin position="709"/>
        <end position="832"/>
    </location>
</feature>
<feature type="region of interest" description="Disordered" evidence="4">
    <location>
        <begin position="1"/>
        <end position="102"/>
    </location>
</feature>
<feature type="region of interest" description="Disordered" evidence="4">
    <location>
        <begin position="1038"/>
        <end position="1058"/>
    </location>
</feature>
<feature type="region of interest" description="Disordered" evidence="4">
    <location>
        <begin position="1390"/>
        <end position="1442"/>
    </location>
</feature>
<feature type="region of interest" description="Disordered" evidence="4">
    <location>
        <begin position="1458"/>
        <end position="1516"/>
    </location>
</feature>
<feature type="region of interest" description="Disordered" evidence="4">
    <location>
        <begin position="1546"/>
        <end position="1695"/>
    </location>
</feature>
<feature type="region of interest" description="Disordered" evidence="4">
    <location>
        <begin position="1707"/>
        <end position="1895"/>
    </location>
</feature>
<feature type="compositionally biased region" description="Basic residues" evidence="4">
    <location>
        <begin position="50"/>
        <end position="89"/>
    </location>
</feature>
<feature type="compositionally biased region" description="Low complexity" evidence="4">
    <location>
        <begin position="90"/>
        <end position="100"/>
    </location>
</feature>
<feature type="compositionally biased region" description="Basic and acidic residues" evidence="4">
    <location>
        <begin position="1047"/>
        <end position="1058"/>
    </location>
</feature>
<feature type="compositionally biased region" description="Basic residues" evidence="4">
    <location>
        <begin position="1426"/>
        <end position="1442"/>
    </location>
</feature>
<feature type="compositionally biased region" description="Basic and acidic residues" evidence="4">
    <location>
        <begin position="1486"/>
        <end position="1497"/>
    </location>
</feature>
<feature type="compositionally biased region" description="Basic and acidic residues" evidence="4">
    <location>
        <begin position="1507"/>
        <end position="1516"/>
    </location>
</feature>
<feature type="compositionally biased region" description="Acidic residues" evidence="4">
    <location>
        <begin position="1552"/>
        <end position="1568"/>
    </location>
</feature>
<feature type="compositionally biased region" description="Basic and acidic residues" evidence="4">
    <location>
        <begin position="1580"/>
        <end position="1602"/>
    </location>
</feature>
<feature type="compositionally biased region" description="Polar residues" evidence="4">
    <location>
        <begin position="1633"/>
        <end position="1667"/>
    </location>
</feature>
<feature type="compositionally biased region" description="Low complexity" evidence="4">
    <location>
        <begin position="1709"/>
        <end position="1724"/>
    </location>
</feature>
<feature type="compositionally biased region" description="Basic and acidic residues" evidence="4">
    <location>
        <begin position="1754"/>
        <end position="1764"/>
    </location>
</feature>
<feature type="compositionally biased region" description="Basic and acidic residues" evidence="4">
    <location>
        <begin position="1774"/>
        <end position="1793"/>
    </location>
</feature>
<feature type="compositionally biased region" description="Basic and acidic residues" evidence="4">
    <location>
        <begin position="1800"/>
        <end position="1810"/>
    </location>
</feature>
<feature type="compositionally biased region" description="Basic and acidic residues" evidence="4">
    <location>
        <begin position="1837"/>
        <end position="1863"/>
    </location>
</feature>
<feature type="compositionally biased region" description="Polar residues" evidence="4">
    <location>
        <begin position="1879"/>
        <end position="1889"/>
    </location>
</feature>
<feature type="glycosylation site" description="N-linked (GlcNAc...) asparagine" evidence="2">
    <location>
        <position position="12"/>
    </location>
</feature>
<feature type="glycosylation site" description="N-linked (GlcNAc...) asparagine" evidence="2">
    <location>
        <position position="244"/>
    </location>
</feature>
<feature type="glycosylation site" description="N-linked (GlcNAc...) asparagine" evidence="2">
    <location>
        <position position="419"/>
    </location>
</feature>
<feature type="glycosylation site" description="N-linked (GlcNAc...) asparagine" evidence="2">
    <location>
        <position position="531"/>
    </location>
</feature>
<feature type="glycosylation site" description="N-linked (GlcNAc...) asparagine" evidence="2">
    <location>
        <position position="579"/>
    </location>
</feature>
<feature type="glycosylation site" description="N-linked (GlcNAc...) asparagine" evidence="2">
    <location>
        <position position="585"/>
    </location>
</feature>
<feature type="glycosylation site" description="N-linked (GlcNAc...) asparagine" evidence="2">
    <location>
        <position position="612"/>
    </location>
</feature>
<feature type="glycosylation site" description="N-linked (GlcNAc...) asparagine" evidence="2">
    <location>
        <position position="645"/>
    </location>
</feature>
<feature type="glycosylation site" description="N-linked (GlcNAc...) asparagine" evidence="2">
    <location>
        <position position="912"/>
    </location>
</feature>
<feature type="sequence conflict" description="In Ref. 4; AAM29379." evidence="7" ref="4">
    <original>D</original>
    <variation>DTLTPLQ</variation>
    <location>
        <position position="926"/>
    </location>
</feature>
<protein>
    <recommendedName>
        <fullName>Cadherin-86C</fullName>
    </recommendedName>
</protein>
<dbReference type="EMBL" id="EU707853">
    <property type="protein sequence ID" value="ACD79974.1"/>
    <property type="molecule type" value="mRNA"/>
</dbReference>
<dbReference type="EMBL" id="AE014297">
    <property type="protein sequence ID" value="AAF54562.5"/>
    <property type="molecule type" value="Genomic_DNA"/>
</dbReference>
<dbReference type="EMBL" id="AY113374">
    <property type="protein sequence ID" value="AAM29379.1"/>
    <property type="status" value="ALT_SEQ"/>
    <property type="molecule type" value="mRNA"/>
</dbReference>
<dbReference type="RefSeq" id="NP_001247031.1">
    <property type="nucleotide sequence ID" value="NM_001260102.1"/>
</dbReference>
<dbReference type="RefSeq" id="NP_788635.3">
    <property type="nucleotide sequence ID" value="NM_176458.4"/>
</dbReference>
<dbReference type="SMR" id="Q9VGW1"/>
<dbReference type="BioGRID" id="66446">
    <property type="interactions" value="2"/>
</dbReference>
<dbReference type="IntAct" id="Q9VGW1">
    <property type="interactions" value="5"/>
</dbReference>
<dbReference type="STRING" id="7227.FBpp0293207"/>
<dbReference type="GlyCosmos" id="Q9VGW1">
    <property type="glycosylation" value="9 sites, No reported glycans"/>
</dbReference>
<dbReference type="GlyGen" id="Q9VGW1">
    <property type="glycosylation" value="9 sites"/>
</dbReference>
<dbReference type="PaxDb" id="7227-FBpp0293207"/>
<dbReference type="GeneID" id="41302"/>
<dbReference type="KEGG" id="dme:Dmel_CG42601"/>
<dbReference type="AGR" id="FB:FBgn0261053"/>
<dbReference type="CTD" id="41302"/>
<dbReference type="FlyBase" id="FBgn0261053">
    <property type="gene designation" value="Cad86C"/>
</dbReference>
<dbReference type="VEuPathDB" id="VectorBase:FBgn0261053"/>
<dbReference type="eggNOG" id="KOG3594">
    <property type="taxonomic scope" value="Eukaryota"/>
</dbReference>
<dbReference type="HOGENOM" id="CLU_001960_1_0_1"/>
<dbReference type="InParanoid" id="Q9VGW1"/>
<dbReference type="OrthoDB" id="8188793at2759"/>
<dbReference type="BioGRID-ORCS" id="41302">
    <property type="hits" value="0 hits in 1 CRISPR screen"/>
</dbReference>
<dbReference type="GenomeRNAi" id="41302"/>
<dbReference type="PRO" id="PR:Q9VGW1"/>
<dbReference type="Proteomes" id="UP000000803">
    <property type="component" value="Chromosome 3R"/>
</dbReference>
<dbReference type="ExpressionAtlas" id="Q9VGW1">
    <property type="expression patterns" value="baseline and differential"/>
</dbReference>
<dbReference type="GO" id="GO:0005886">
    <property type="term" value="C:plasma membrane"/>
    <property type="evidence" value="ECO:0000250"/>
    <property type="project" value="FlyBase"/>
</dbReference>
<dbReference type="GO" id="GO:0035003">
    <property type="term" value="C:subapical complex"/>
    <property type="evidence" value="ECO:0000314"/>
    <property type="project" value="FlyBase"/>
</dbReference>
<dbReference type="GO" id="GO:0005509">
    <property type="term" value="F:calcium ion binding"/>
    <property type="evidence" value="ECO:0000255"/>
    <property type="project" value="FlyBase"/>
</dbReference>
<dbReference type="GO" id="GO:0016339">
    <property type="term" value="P:calcium-dependent cell-cell adhesion via plasma membrane cell adhesion molecules"/>
    <property type="evidence" value="ECO:0000250"/>
    <property type="project" value="FlyBase"/>
</dbReference>
<dbReference type="GO" id="GO:0098609">
    <property type="term" value="P:cell-cell adhesion"/>
    <property type="evidence" value="ECO:0000318"/>
    <property type="project" value="GO_Central"/>
</dbReference>
<dbReference type="GO" id="GO:0044331">
    <property type="term" value="P:cell-cell adhesion mediated by cadherin"/>
    <property type="evidence" value="ECO:0000255"/>
    <property type="project" value="FlyBase"/>
</dbReference>
<dbReference type="GO" id="GO:0007156">
    <property type="term" value="P:homophilic cell adhesion via plasma membrane adhesion molecules"/>
    <property type="evidence" value="ECO:0007669"/>
    <property type="project" value="InterPro"/>
</dbReference>
<dbReference type="GO" id="GO:0008360">
    <property type="term" value="P:regulation of cell shape"/>
    <property type="evidence" value="ECO:0000315"/>
    <property type="project" value="FlyBase"/>
</dbReference>
<dbReference type="CDD" id="cd11304">
    <property type="entry name" value="Cadherin_repeat"/>
    <property type="match status" value="5"/>
</dbReference>
<dbReference type="FunFam" id="2.60.40.60:FF:000246">
    <property type="entry name" value="Cadherin 86C, isoform E"/>
    <property type="match status" value="1"/>
</dbReference>
<dbReference type="FunFam" id="2.60.40.60:FF:000295">
    <property type="entry name" value="Cadherin 86C, isoform E"/>
    <property type="match status" value="1"/>
</dbReference>
<dbReference type="FunFam" id="2.60.40.60:FF:000098">
    <property type="entry name" value="cadherin-23 isoform X1"/>
    <property type="match status" value="1"/>
</dbReference>
<dbReference type="FunFam" id="2.60.40.60:FF:000289">
    <property type="entry name" value="cadherin-86C isoform X2"/>
    <property type="match status" value="1"/>
</dbReference>
<dbReference type="FunFam" id="2.60.40.60:FF:000259">
    <property type="entry name" value="cadherin-86C isoform X3"/>
    <property type="match status" value="1"/>
</dbReference>
<dbReference type="Gene3D" id="2.60.40.60">
    <property type="entry name" value="Cadherins"/>
    <property type="match status" value="5"/>
</dbReference>
<dbReference type="InterPro" id="IPR002126">
    <property type="entry name" value="Cadherin-like_dom"/>
</dbReference>
<dbReference type="InterPro" id="IPR015919">
    <property type="entry name" value="Cadherin-like_sf"/>
</dbReference>
<dbReference type="InterPro" id="IPR020894">
    <property type="entry name" value="Cadherin_CS"/>
</dbReference>
<dbReference type="PANTHER" id="PTHR24026:SF96">
    <property type="entry name" value="CADHERIN-86C"/>
    <property type="match status" value="1"/>
</dbReference>
<dbReference type="PANTHER" id="PTHR24026">
    <property type="entry name" value="FAT ATYPICAL CADHERIN-RELATED"/>
    <property type="match status" value="1"/>
</dbReference>
<dbReference type="Pfam" id="PF00028">
    <property type="entry name" value="Cadherin"/>
    <property type="match status" value="2"/>
</dbReference>
<dbReference type="PRINTS" id="PR00205">
    <property type="entry name" value="CADHERIN"/>
</dbReference>
<dbReference type="SMART" id="SM00112">
    <property type="entry name" value="CA"/>
    <property type="match status" value="5"/>
</dbReference>
<dbReference type="SUPFAM" id="SSF49313">
    <property type="entry name" value="Cadherin-like"/>
    <property type="match status" value="5"/>
</dbReference>
<dbReference type="PROSITE" id="PS00232">
    <property type="entry name" value="CADHERIN_1"/>
    <property type="match status" value="1"/>
</dbReference>
<dbReference type="PROSITE" id="PS50268">
    <property type="entry name" value="CADHERIN_2"/>
    <property type="match status" value="5"/>
</dbReference>
<organism>
    <name type="scientific">Drosophila melanogaster</name>
    <name type="common">Fruit fly</name>
    <dbReference type="NCBI Taxonomy" id="7227"/>
    <lineage>
        <taxon>Eukaryota</taxon>
        <taxon>Metazoa</taxon>
        <taxon>Ecdysozoa</taxon>
        <taxon>Arthropoda</taxon>
        <taxon>Hexapoda</taxon>
        <taxon>Insecta</taxon>
        <taxon>Pterygota</taxon>
        <taxon>Neoptera</taxon>
        <taxon>Endopterygota</taxon>
        <taxon>Diptera</taxon>
        <taxon>Brachycera</taxon>
        <taxon>Muscomorpha</taxon>
        <taxon>Ephydroidea</taxon>
        <taxon>Drosophilidae</taxon>
        <taxon>Drosophila</taxon>
        <taxon>Sophophora</taxon>
    </lineage>
</organism>
<keyword id="KW-0106">Calcium</keyword>
<keyword id="KW-0130">Cell adhesion</keyword>
<keyword id="KW-1003">Cell membrane</keyword>
<keyword id="KW-0325">Glycoprotein</keyword>
<keyword id="KW-0472">Membrane</keyword>
<keyword id="KW-0479">Metal-binding</keyword>
<keyword id="KW-1185">Reference proteome</keyword>
<keyword id="KW-0677">Repeat</keyword>
<keyword id="KW-0732">Signal</keyword>
<keyword id="KW-0812">Transmembrane</keyword>
<keyword id="KW-1133">Transmembrane helix</keyword>
<evidence type="ECO:0000250" key="1"/>
<evidence type="ECO:0000255" key="2"/>
<evidence type="ECO:0000255" key="3">
    <source>
        <dbReference type="PROSITE-ProRule" id="PRU00043"/>
    </source>
</evidence>
<evidence type="ECO:0000256" key="4">
    <source>
        <dbReference type="SAM" id="MobiDB-lite"/>
    </source>
</evidence>
<evidence type="ECO:0000269" key="5">
    <source>
    </source>
</evidence>
<evidence type="ECO:0000269" key="6">
    <source>
    </source>
</evidence>
<evidence type="ECO:0000305" key="7"/>
<gene>
    <name type="primary">Cad86C</name>
    <name type="ORF">CG4509</name>
</gene>
<reference key="1">
    <citation type="journal article" date="2008" name="Mech. Dev.">
        <title>Hedgehog and Dpp signaling induce cadherin Cad86C expression in the morphogenetic furrow during Drosophila eye development.</title>
        <authorList>
            <person name="Schlichting K."/>
            <person name="Dahmann C."/>
        </authorList>
    </citation>
    <scope>NUCLEOTIDE SEQUENCE [MRNA]</scope>
    <scope>TISSUE SPECIFICITY</scope>
    <scope>INDUCTION</scope>
</reference>
<reference key="2">
    <citation type="journal article" date="2000" name="Science">
        <title>The genome sequence of Drosophila melanogaster.</title>
        <authorList>
            <person name="Adams M.D."/>
            <person name="Celniker S.E."/>
            <person name="Holt R.A."/>
            <person name="Evans C.A."/>
            <person name="Gocayne J.D."/>
            <person name="Amanatides P.G."/>
            <person name="Scherer S.E."/>
            <person name="Li P.W."/>
            <person name="Hoskins R.A."/>
            <person name="Galle R.F."/>
            <person name="George R.A."/>
            <person name="Lewis S.E."/>
            <person name="Richards S."/>
            <person name="Ashburner M."/>
            <person name="Henderson S.N."/>
            <person name="Sutton G.G."/>
            <person name="Wortman J.R."/>
            <person name="Yandell M.D."/>
            <person name="Zhang Q."/>
            <person name="Chen L.X."/>
            <person name="Brandon R.C."/>
            <person name="Rogers Y.-H.C."/>
            <person name="Blazej R.G."/>
            <person name="Champe M."/>
            <person name="Pfeiffer B.D."/>
            <person name="Wan K.H."/>
            <person name="Doyle C."/>
            <person name="Baxter E.G."/>
            <person name="Helt G."/>
            <person name="Nelson C.R."/>
            <person name="Miklos G.L.G."/>
            <person name="Abril J.F."/>
            <person name="Agbayani A."/>
            <person name="An H.-J."/>
            <person name="Andrews-Pfannkoch C."/>
            <person name="Baldwin D."/>
            <person name="Ballew R.M."/>
            <person name="Basu A."/>
            <person name="Baxendale J."/>
            <person name="Bayraktaroglu L."/>
            <person name="Beasley E.M."/>
            <person name="Beeson K.Y."/>
            <person name="Benos P.V."/>
            <person name="Berman B.P."/>
            <person name="Bhandari D."/>
            <person name="Bolshakov S."/>
            <person name="Borkova D."/>
            <person name="Botchan M.R."/>
            <person name="Bouck J."/>
            <person name="Brokstein P."/>
            <person name="Brottier P."/>
            <person name="Burtis K.C."/>
            <person name="Busam D.A."/>
            <person name="Butler H."/>
            <person name="Cadieu E."/>
            <person name="Center A."/>
            <person name="Chandra I."/>
            <person name="Cherry J.M."/>
            <person name="Cawley S."/>
            <person name="Dahlke C."/>
            <person name="Davenport L.B."/>
            <person name="Davies P."/>
            <person name="de Pablos B."/>
            <person name="Delcher A."/>
            <person name="Deng Z."/>
            <person name="Mays A.D."/>
            <person name="Dew I."/>
            <person name="Dietz S.M."/>
            <person name="Dodson K."/>
            <person name="Doup L.E."/>
            <person name="Downes M."/>
            <person name="Dugan-Rocha S."/>
            <person name="Dunkov B.C."/>
            <person name="Dunn P."/>
            <person name="Durbin K.J."/>
            <person name="Evangelista C.C."/>
            <person name="Ferraz C."/>
            <person name="Ferriera S."/>
            <person name="Fleischmann W."/>
            <person name="Fosler C."/>
            <person name="Gabrielian A.E."/>
            <person name="Garg N.S."/>
            <person name="Gelbart W.M."/>
            <person name="Glasser K."/>
            <person name="Glodek A."/>
            <person name="Gong F."/>
            <person name="Gorrell J.H."/>
            <person name="Gu Z."/>
            <person name="Guan P."/>
            <person name="Harris M."/>
            <person name="Harris N.L."/>
            <person name="Harvey D.A."/>
            <person name="Heiman T.J."/>
            <person name="Hernandez J.R."/>
            <person name="Houck J."/>
            <person name="Hostin D."/>
            <person name="Houston K.A."/>
            <person name="Howland T.J."/>
            <person name="Wei M.-H."/>
            <person name="Ibegwam C."/>
            <person name="Jalali M."/>
            <person name="Kalush F."/>
            <person name="Karpen G.H."/>
            <person name="Ke Z."/>
            <person name="Kennison J.A."/>
            <person name="Ketchum K.A."/>
            <person name="Kimmel B.E."/>
            <person name="Kodira C.D."/>
            <person name="Kraft C.L."/>
            <person name="Kravitz S."/>
            <person name="Kulp D."/>
            <person name="Lai Z."/>
            <person name="Lasko P."/>
            <person name="Lei Y."/>
            <person name="Levitsky A.A."/>
            <person name="Li J.H."/>
            <person name="Li Z."/>
            <person name="Liang Y."/>
            <person name="Lin X."/>
            <person name="Liu X."/>
            <person name="Mattei B."/>
            <person name="McIntosh T.C."/>
            <person name="McLeod M.P."/>
            <person name="McPherson D."/>
            <person name="Merkulov G."/>
            <person name="Milshina N.V."/>
            <person name="Mobarry C."/>
            <person name="Morris J."/>
            <person name="Moshrefi A."/>
            <person name="Mount S.M."/>
            <person name="Moy M."/>
            <person name="Murphy B."/>
            <person name="Murphy L."/>
            <person name="Muzny D.M."/>
            <person name="Nelson D.L."/>
            <person name="Nelson D.R."/>
            <person name="Nelson K.A."/>
            <person name="Nixon K."/>
            <person name="Nusskern D.R."/>
            <person name="Pacleb J.M."/>
            <person name="Palazzolo M."/>
            <person name="Pittman G.S."/>
            <person name="Pan S."/>
            <person name="Pollard J."/>
            <person name="Puri V."/>
            <person name="Reese M.G."/>
            <person name="Reinert K."/>
            <person name="Remington K."/>
            <person name="Saunders R.D.C."/>
            <person name="Scheeler F."/>
            <person name="Shen H."/>
            <person name="Shue B.C."/>
            <person name="Siden-Kiamos I."/>
            <person name="Simpson M."/>
            <person name="Skupski M.P."/>
            <person name="Smith T.J."/>
            <person name="Spier E."/>
            <person name="Spradling A.C."/>
            <person name="Stapleton M."/>
            <person name="Strong R."/>
            <person name="Sun E."/>
            <person name="Svirskas R."/>
            <person name="Tector C."/>
            <person name="Turner R."/>
            <person name="Venter E."/>
            <person name="Wang A.H."/>
            <person name="Wang X."/>
            <person name="Wang Z.-Y."/>
            <person name="Wassarman D.A."/>
            <person name="Weinstock G.M."/>
            <person name="Weissenbach J."/>
            <person name="Williams S.M."/>
            <person name="Woodage T."/>
            <person name="Worley K.C."/>
            <person name="Wu D."/>
            <person name="Yang S."/>
            <person name="Yao Q.A."/>
            <person name="Ye J."/>
            <person name="Yeh R.-F."/>
            <person name="Zaveri J.S."/>
            <person name="Zhan M."/>
            <person name="Zhang G."/>
            <person name="Zhao Q."/>
            <person name="Zheng L."/>
            <person name="Zheng X.H."/>
            <person name="Zhong F.N."/>
            <person name="Zhong W."/>
            <person name="Zhou X."/>
            <person name="Zhu S.C."/>
            <person name="Zhu X."/>
            <person name="Smith H.O."/>
            <person name="Gibbs R.A."/>
            <person name="Myers E.W."/>
            <person name="Rubin G.M."/>
            <person name="Venter J.C."/>
        </authorList>
    </citation>
    <scope>NUCLEOTIDE SEQUENCE [LARGE SCALE GENOMIC DNA]</scope>
    <source>
        <strain>Berkeley</strain>
    </source>
</reference>
<reference key="3">
    <citation type="journal article" date="2002" name="Genome Biol.">
        <title>Annotation of the Drosophila melanogaster euchromatic genome: a systematic review.</title>
        <authorList>
            <person name="Misra S."/>
            <person name="Crosby M.A."/>
            <person name="Mungall C.J."/>
            <person name="Matthews B.B."/>
            <person name="Campbell K.S."/>
            <person name="Hradecky P."/>
            <person name="Huang Y."/>
            <person name="Kaminker J.S."/>
            <person name="Millburn G.H."/>
            <person name="Prochnik S.E."/>
            <person name="Smith C.D."/>
            <person name="Tupy J.L."/>
            <person name="Whitfield E.J."/>
            <person name="Bayraktaroglu L."/>
            <person name="Berman B.P."/>
            <person name="Bettencourt B.R."/>
            <person name="Celniker S.E."/>
            <person name="de Grey A.D.N.J."/>
            <person name="Drysdale R.A."/>
            <person name="Harris N.L."/>
            <person name="Richter J."/>
            <person name="Russo S."/>
            <person name="Schroeder A.J."/>
            <person name="Shu S.Q."/>
            <person name="Stapleton M."/>
            <person name="Yamada C."/>
            <person name="Ashburner M."/>
            <person name="Gelbart W.M."/>
            <person name="Rubin G.M."/>
            <person name="Lewis S.E."/>
        </authorList>
    </citation>
    <scope>GENOME REANNOTATION</scope>
    <source>
        <strain>Berkeley</strain>
    </source>
</reference>
<reference key="4">
    <citation type="journal article" date="2002" name="Genome Biol.">
        <title>A Drosophila full-length cDNA resource.</title>
        <authorList>
            <person name="Stapleton M."/>
            <person name="Carlson J.W."/>
            <person name="Brokstein P."/>
            <person name="Yu C."/>
            <person name="Champe M."/>
            <person name="George R.A."/>
            <person name="Guarin H."/>
            <person name="Kronmiller B."/>
            <person name="Pacleb J.M."/>
            <person name="Park S."/>
            <person name="Wan K.H."/>
            <person name="Rubin G.M."/>
            <person name="Celniker S.E."/>
        </authorList>
    </citation>
    <scope>NUCLEOTIDE SEQUENCE [LARGE SCALE MRNA] OF 726-1943</scope>
    <source>
        <strain>Berkeley</strain>
        <tissue>Larva</tissue>
        <tissue>Pupae</tissue>
    </source>
</reference>
<reference key="5">
    <citation type="journal article" date="2006" name="Curr. Biol.">
        <title>Coordinated control of cell adhesion, polarity, and cytoskeleton underlies Hox-induced organogenesis in Drosophila.</title>
        <authorList>
            <person name="Lovegrove B."/>
            <person name="Simoes S."/>
            <person name="Rivas M.L."/>
            <person name="Sotillos S."/>
            <person name="Johnson K."/>
            <person name="Knust E."/>
            <person name="Jacinto A."/>
            <person name="Hombria J.C."/>
        </authorList>
    </citation>
    <scope>IDENTIFICATION</scope>
    <scope>TISSUE SPECIFICITY</scope>
</reference>
<proteinExistence type="evidence at transcript level"/>
<name>CAD86_DROME</name>